<reference key="1">
    <citation type="journal article" date="1997" name="Virology">
        <title>The sequence of the Orgyia pseudotsugata multinucleocapsid nuclear polyhedrosis virus genome.</title>
        <authorList>
            <person name="Ahrens C.H."/>
            <person name="Russell R.R."/>
            <person name="Funk C.J."/>
            <person name="Evans J."/>
            <person name="Harwood S."/>
            <person name="Rohrmann G.F."/>
        </authorList>
    </citation>
    <scope>NUCLEOTIDE SEQUENCE [LARGE SCALE GENOMIC DNA]</scope>
</reference>
<proteinExistence type="predicted"/>
<organism>
    <name type="scientific">Orgyia pseudotsugata multicapsid polyhedrosis virus</name>
    <name type="common">OpMNPV</name>
    <dbReference type="NCBI Taxonomy" id="262177"/>
    <lineage>
        <taxon>Viruses</taxon>
        <taxon>Viruses incertae sedis</taxon>
        <taxon>Naldaviricetes</taxon>
        <taxon>Lefavirales</taxon>
        <taxon>Baculoviridae</taxon>
        <taxon>Alphabaculovirus</taxon>
        <taxon>Alphabaculovirus orpseudotsugatae</taxon>
    </lineage>
</organism>
<dbReference type="EMBL" id="U75930">
    <property type="protein sequence ID" value="AAC59138.1"/>
    <property type="molecule type" value="Genomic_DNA"/>
</dbReference>
<dbReference type="RefSeq" id="NP_046295.1">
    <property type="nucleotide sequence ID" value="NC_001875.2"/>
</dbReference>
<dbReference type="SMR" id="O10370"/>
<dbReference type="KEGG" id="vg:912004"/>
<dbReference type="OrthoDB" id="4896at10239"/>
<dbReference type="Proteomes" id="UP000009248">
    <property type="component" value="Genome"/>
</dbReference>
<dbReference type="InterPro" id="IPR006997">
    <property type="entry name" value="Baculo_Y142"/>
</dbReference>
<dbReference type="Pfam" id="PF04913">
    <property type="entry name" value="Baculo_Y142"/>
    <property type="match status" value="1"/>
</dbReference>
<name>Y142_NPVOP</name>
<sequence length="484" mass="55755">MSGNNLIALAQDQFKYLFLGSYFDLKDFSHVPAEAKAFIGNYLDCNFRVLDDATLQNYTGYLRSIQLRHMVGGLLTPDVYKFIKPQFRFVCDRATVDILEFDSRMYIKPGTPVYATNLFTSNPRKMTSFIYSEFTKVYKNRLFANTTNHGCVLAGAAGFVFEDAYVDWSGVRMCAAPRLDNNRHPFRLYLLGEEMAAHFVAHNILPPHPANAARVNNSMFMLKNFYKGLPLYRLQYQVVNSMKFTTRKPNRVFDEIDKELNSHSPFVKLIQRDYIYDAQFPPDLLEVLNEYMTRSSFMKFITKFAIEENASANDMLREVVFDRYAVDCYRKLYIKMELTNVFPAMYDNESAYLFINKDLLQLTGTLNAFYAPKLRILSILSVNRLFGATKTLDYHPNLLVYRQSSPPVRLTGDVYAVDKGKKIFLVKHTFSNTVPAYLLVRGDYESTSELKSLRDLNPWVQNTLLELLIVDDPSVAAHTAKNSK</sequence>
<accession>O10370</accession>
<gene>
    <name type="ORF">ORF139</name>
</gene>
<keyword id="KW-1185">Reference proteome</keyword>
<organismHost>
    <name type="scientific">Orgyia pseudotsugata</name>
    <name type="common">Douglas-fir tussock moth</name>
    <dbReference type="NCBI Taxonomy" id="33414"/>
</organismHost>
<protein>
    <recommendedName>
        <fullName>Uncharacterized 55.8 kDa protein</fullName>
    </recommendedName>
</protein>
<feature type="chain" id="PRO_0000133068" description="Uncharacterized 55.8 kDa protein">
    <location>
        <begin position="1"/>
        <end position="484"/>
    </location>
</feature>